<sequence>MMEMRVGIVGGGLAGLTAAIALAEKGFDVSIIGPRSTDSNSYLAQAGIALPLLEGDSIRIHVLDTIKAGKYINDEEIVWNVISKSSEAHDFLTSHGVTFTGNELEGGHSYPRIFTIKSETGKHIIPILEKHARELDVNFIRGFVEEIGINNGKLAGVFLQGELLKFDAVVIAAGGFSGLYRFTAGVKNNIGLLIGDVALKGVPLRDMEFVQFHPTGFIGKRTYLITEAVRGAGAKLVTGDGERFVNELETRDIVARAIYMKMLEGKGVFLDARGIENFKDRFPYIYSVLRGEGINPEKDLIPITPVAHYTIGGISVDAFYRTRIKGLYAIGESACNGFHGANRLASNSLLECVVSGLEVARTISREKPKREVNDAPYSFNELGDVDSIREVLWNHAGIVRDEWSLREGLRKLKEIEVDERLKLVAKAVIISALKREESRGAHYRKDYPFMRKEFEHSSFFYPNV</sequence>
<name>NADB_PYRHO</name>
<feature type="chain" id="PRO_0000184410" description="L-aspartate oxidase">
    <location>
        <begin position="1"/>
        <end position="464"/>
    </location>
</feature>
<feature type="active site" description="Proton donor/acceptor" evidence="1">
    <location>
        <position position="251"/>
    </location>
</feature>
<feature type="binding site" evidence="1">
    <location>
        <begin position="11"/>
        <end position="14"/>
    </location>
    <ligand>
        <name>FAD</name>
        <dbReference type="ChEBI" id="CHEBI:57692"/>
    </ligand>
</feature>
<feature type="binding site" evidence="1">
    <location>
        <begin position="40"/>
        <end position="47"/>
    </location>
    <ligand>
        <name>FAD</name>
        <dbReference type="ChEBI" id="CHEBI:57692"/>
    </ligand>
</feature>
<feature type="binding site" evidence="1">
    <location>
        <position position="332"/>
    </location>
    <ligand>
        <name>FAD</name>
        <dbReference type="ChEBI" id="CHEBI:57692"/>
    </ligand>
</feature>
<feature type="binding site" evidence="1">
    <location>
        <begin position="348"/>
        <end position="349"/>
    </location>
    <ligand>
        <name>FAD</name>
        <dbReference type="ChEBI" id="CHEBI:57692"/>
    </ligand>
</feature>
<feature type="site" description="Important in orienting the L-aspartate substrate" evidence="1">
    <location>
        <position position="105"/>
    </location>
</feature>
<comment type="function">
    <text evidence="1">Catalyzes the oxidation of L-aspartate to iminoaspartate, the first step in the de novo biosynthesis of NAD(+).</text>
</comment>
<comment type="catalytic activity">
    <reaction evidence="1">
        <text>L-aspartate + O2 = iminosuccinate + H2O2</text>
        <dbReference type="Rhea" id="RHEA:25876"/>
        <dbReference type="ChEBI" id="CHEBI:15379"/>
        <dbReference type="ChEBI" id="CHEBI:16240"/>
        <dbReference type="ChEBI" id="CHEBI:29991"/>
        <dbReference type="ChEBI" id="CHEBI:77875"/>
        <dbReference type="EC" id="1.4.3.16"/>
    </reaction>
    <physiologicalReaction direction="left-to-right" evidence="1">
        <dbReference type="Rhea" id="RHEA:25877"/>
    </physiologicalReaction>
</comment>
<comment type="cofactor">
    <cofactor evidence="1">
        <name>FAD</name>
        <dbReference type="ChEBI" id="CHEBI:57692"/>
    </cofactor>
    <text evidence="1">Binds 1 FAD per subunit.</text>
</comment>
<comment type="pathway">
    <text evidence="1">Cofactor biosynthesis; NAD(+) biosynthesis; iminoaspartate from L-aspartate (oxidase route): step 1/1.</text>
</comment>
<comment type="subcellular location">
    <subcellularLocation>
        <location evidence="1">Cytoplasm</location>
    </subcellularLocation>
</comment>
<comment type="similarity">
    <text evidence="2">Belongs to the FAD-dependent oxidoreductase 2 family. NadB subfamily.</text>
</comment>
<accession>O57765</accession>
<protein>
    <recommendedName>
        <fullName evidence="1">L-aspartate oxidase</fullName>
        <shortName evidence="1">LASPO</shortName>
        <ecNumber evidence="1">1.4.3.16</ecNumber>
    </recommendedName>
    <alternativeName>
        <fullName>Quinolinate synthase B</fullName>
    </alternativeName>
</protein>
<evidence type="ECO:0000250" key="1">
    <source>
        <dbReference type="UniProtKB" id="P10902"/>
    </source>
</evidence>
<evidence type="ECO:0000305" key="2"/>
<keyword id="KW-0963">Cytoplasm</keyword>
<keyword id="KW-0274">FAD</keyword>
<keyword id="KW-0285">Flavoprotein</keyword>
<keyword id="KW-0547">Nucleotide-binding</keyword>
<keyword id="KW-0560">Oxidoreductase</keyword>
<keyword id="KW-0662">Pyridine nucleotide biosynthesis</keyword>
<dbReference type="EC" id="1.4.3.16" evidence="1"/>
<dbReference type="EMBL" id="BA000001">
    <property type="protein sequence ID" value="BAA29083.1"/>
    <property type="molecule type" value="Genomic_DNA"/>
</dbReference>
<dbReference type="PIR" id="D71219">
    <property type="entry name" value="D71219"/>
</dbReference>
<dbReference type="SMR" id="O57765"/>
<dbReference type="STRING" id="70601.gene:9376922"/>
<dbReference type="EnsemblBacteria" id="BAA29083">
    <property type="protein sequence ID" value="BAA29083"/>
    <property type="gene ID" value="BAA29083"/>
</dbReference>
<dbReference type="KEGG" id="pho:PH0015"/>
<dbReference type="eggNOG" id="arCOG00572">
    <property type="taxonomic scope" value="Archaea"/>
</dbReference>
<dbReference type="UniPathway" id="UPA00253">
    <property type="reaction ID" value="UER00326"/>
</dbReference>
<dbReference type="Proteomes" id="UP000000752">
    <property type="component" value="Chromosome"/>
</dbReference>
<dbReference type="GO" id="GO:0005737">
    <property type="term" value="C:cytoplasm"/>
    <property type="evidence" value="ECO:0007669"/>
    <property type="project" value="UniProtKB-SubCell"/>
</dbReference>
<dbReference type="GO" id="GO:0008734">
    <property type="term" value="F:L-aspartate oxidase activity"/>
    <property type="evidence" value="ECO:0007669"/>
    <property type="project" value="UniProtKB-EC"/>
</dbReference>
<dbReference type="GO" id="GO:0000166">
    <property type="term" value="F:nucleotide binding"/>
    <property type="evidence" value="ECO:0007669"/>
    <property type="project" value="UniProtKB-KW"/>
</dbReference>
<dbReference type="GO" id="GO:0009435">
    <property type="term" value="P:NAD biosynthetic process"/>
    <property type="evidence" value="ECO:0007669"/>
    <property type="project" value="UniProtKB-UniPathway"/>
</dbReference>
<dbReference type="Gene3D" id="3.50.50.60">
    <property type="entry name" value="FAD/NAD(P)-binding domain"/>
    <property type="match status" value="1"/>
</dbReference>
<dbReference type="Gene3D" id="1.20.58.100">
    <property type="entry name" value="Fumarate reductase/succinate dehydrogenase flavoprotein-like, C-terminal domain"/>
    <property type="match status" value="1"/>
</dbReference>
<dbReference type="Gene3D" id="3.90.700.10">
    <property type="entry name" value="Succinate dehydrogenase/fumarate reductase flavoprotein, catalytic domain"/>
    <property type="match status" value="1"/>
</dbReference>
<dbReference type="InterPro" id="IPR003953">
    <property type="entry name" value="FAD-dep_OxRdtase_2_FAD-bd"/>
</dbReference>
<dbReference type="InterPro" id="IPR036188">
    <property type="entry name" value="FAD/NAD-bd_sf"/>
</dbReference>
<dbReference type="InterPro" id="IPR037099">
    <property type="entry name" value="Fum_R/Succ_DH_flav-like_C_sf"/>
</dbReference>
<dbReference type="InterPro" id="IPR015939">
    <property type="entry name" value="Fum_Rdtase/Succ_DH_flav-like_C"/>
</dbReference>
<dbReference type="InterPro" id="IPR005288">
    <property type="entry name" value="NadB"/>
</dbReference>
<dbReference type="InterPro" id="IPR027477">
    <property type="entry name" value="Succ_DH/fumarate_Rdtase_cat_sf"/>
</dbReference>
<dbReference type="NCBIfam" id="TIGR00551">
    <property type="entry name" value="nadB"/>
    <property type="match status" value="1"/>
</dbReference>
<dbReference type="NCBIfam" id="NF006254">
    <property type="entry name" value="PRK08401.1"/>
    <property type="match status" value="1"/>
</dbReference>
<dbReference type="PANTHER" id="PTHR42716">
    <property type="entry name" value="L-ASPARTATE OXIDASE"/>
    <property type="match status" value="1"/>
</dbReference>
<dbReference type="PANTHER" id="PTHR42716:SF2">
    <property type="entry name" value="L-ASPARTATE OXIDASE, CHLOROPLASTIC"/>
    <property type="match status" value="1"/>
</dbReference>
<dbReference type="Pfam" id="PF00890">
    <property type="entry name" value="FAD_binding_2"/>
    <property type="match status" value="1"/>
</dbReference>
<dbReference type="Pfam" id="PF02910">
    <property type="entry name" value="Succ_DH_flav_C"/>
    <property type="match status" value="1"/>
</dbReference>
<dbReference type="PRINTS" id="PR00368">
    <property type="entry name" value="FADPNR"/>
</dbReference>
<dbReference type="PRINTS" id="PR00411">
    <property type="entry name" value="PNDRDTASEI"/>
</dbReference>
<dbReference type="SUPFAM" id="SSF51905">
    <property type="entry name" value="FAD/NAD(P)-binding domain"/>
    <property type="match status" value="1"/>
</dbReference>
<dbReference type="SUPFAM" id="SSF46977">
    <property type="entry name" value="Succinate dehydrogenase/fumarate reductase flavoprotein C-terminal domain"/>
    <property type="match status" value="1"/>
</dbReference>
<dbReference type="SUPFAM" id="SSF56425">
    <property type="entry name" value="Succinate dehydrogenase/fumarate reductase flavoprotein, catalytic domain"/>
    <property type="match status" value="1"/>
</dbReference>
<proteinExistence type="inferred from homology"/>
<organism>
    <name type="scientific">Pyrococcus horikoshii (strain ATCC 700860 / DSM 12428 / JCM 9974 / NBRC 100139 / OT-3)</name>
    <dbReference type="NCBI Taxonomy" id="70601"/>
    <lineage>
        <taxon>Archaea</taxon>
        <taxon>Methanobacteriati</taxon>
        <taxon>Methanobacteriota</taxon>
        <taxon>Thermococci</taxon>
        <taxon>Thermococcales</taxon>
        <taxon>Thermococcaceae</taxon>
        <taxon>Pyrococcus</taxon>
    </lineage>
</organism>
<gene>
    <name type="primary">nadB</name>
    <name type="ordered locus">PH0015</name>
</gene>
<reference key="1">
    <citation type="journal article" date="1998" name="DNA Res.">
        <title>Complete sequence and gene organization of the genome of a hyper-thermophilic archaebacterium, Pyrococcus horikoshii OT3.</title>
        <authorList>
            <person name="Kawarabayasi Y."/>
            <person name="Sawada M."/>
            <person name="Horikawa H."/>
            <person name="Haikawa Y."/>
            <person name="Hino Y."/>
            <person name="Yamamoto S."/>
            <person name="Sekine M."/>
            <person name="Baba S."/>
            <person name="Kosugi H."/>
            <person name="Hosoyama A."/>
            <person name="Nagai Y."/>
            <person name="Sakai M."/>
            <person name="Ogura K."/>
            <person name="Otsuka R."/>
            <person name="Nakazawa H."/>
            <person name="Takamiya M."/>
            <person name="Ohfuku Y."/>
            <person name="Funahashi T."/>
            <person name="Tanaka T."/>
            <person name="Kudoh Y."/>
            <person name="Yamazaki J."/>
            <person name="Kushida N."/>
            <person name="Oguchi A."/>
            <person name="Aoki K."/>
            <person name="Yoshizawa T."/>
            <person name="Nakamura Y."/>
            <person name="Robb F.T."/>
            <person name="Horikoshi K."/>
            <person name="Masuchi Y."/>
            <person name="Shizuya H."/>
            <person name="Kikuchi H."/>
        </authorList>
    </citation>
    <scope>NUCLEOTIDE SEQUENCE [LARGE SCALE GENOMIC DNA]</scope>
    <source>
        <strain>ATCC 700860 / DSM 12428 / JCM 9974 / NBRC 100139 / OT-3</strain>
    </source>
</reference>